<protein>
    <recommendedName>
        <fullName>Uncharacterized protein F317L</fullName>
        <shortName>pF317L</shortName>
    </recommendedName>
</protein>
<organism>
    <name type="scientific">African swine fever virus (isolate Tick/Malawi/Lil 20-1/1983)</name>
    <name type="common">ASFV</name>
    <dbReference type="NCBI Taxonomy" id="10500"/>
    <lineage>
        <taxon>Viruses</taxon>
        <taxon>Varidnaviria</taxon>
        <taxon>Bamfordvirae</taxon>
        <taxon>Nucleocytoviricota</taxon>
        <taxon>Pokkesviricetes</taxon>
        <taxon>Asfuvirales</taxon>
        <taxon>Asfarviridae</taxon>
        <taxon>Asfivirus</taxon>
        <taxon>African swine fever virus</taxon>
    </lineage>
</organism>
<dbReference type="EMBL" id="AY261361">
    <property type="status" value="NOT_ANNOTATED_CDS"/>
    <property type="molecule type" value="Genomic_DNA"/>
</dbReference>
<dbReference type="Proteomes" id="UP000000860">
    <property type="component" value="Segment"/>
</dbReference>
<dbReference type="GO" id="GO:0044423">
    <property type="term" value="C:virion component"/>
    <property type="evidence" value="ECO:0007669"/>
    <property type="project" value="UniProtKB-KW"/>
</dbReference>
<comment type="subcellular location">
    <subcellularLocation>
        <location evidence="1">Virion</location>
    </subcellularLocation>
</comment>
<comment type="induction">
    <text evidence="2">Expressed in the late phase of the viral replicative cycle.</text>
</comment>
<comment type="similarity">
    <text evidence="2">Belongs to the asfivirus F317L family.</text>
</comment>
<feature type="chain" id="PRO_0000373646" description="Uncharacterized protein F317L">
    <location>
        <begin position="1"/>
        <end position="318"/>
    </location>
</feature>
<name>VF317_ASFM2</name>
<reference key="1">
    <citation type="submission" date="2003-03" db="EMBL/GenBank/DDBJ databases">
        <title>African swine fever virus genomes.</title>
        <authorList>
            <person name="Kutish G.F."/>
            <person name="Rock D.L."/>
        </authorList>
    </citation>
    <scope>NUCLEOTIDE SEQUENCE [LARGE SCALE GENOMIC DNA]</scope>
</reference>
<sequence length="318" mass="36687">MVETQMDKLGFLLNHIGKQITTKVLSNAHITQTMKEIILENNSVNVDGGAAKNVSKGKSPPKEKKHWTEFESWEQLSKSKRSFKEYWTERNEIVNTLLLNWDNVRAAIKKFLNDDREWCGRINMINGVPEIVEIIPSPYKAGENIYFGSEAMIPAEIYSRVANKPAMFVFHTHPNLGSCCGGMPSICDISTTLRYLLMGWTAGHLIISSNQVGMLTVDKRIIIDLWANENPRWLMAQKILDIFMMLTSRRSLVNPWTLRDLKKILQDYGIEYIIFPSNDFFIYEDVRLLMISKKWTNFFTLHELLNDLETIETKTSST</sequence>
<organismHost>
    <name type="scientific">Ornithodoros</name>
    <name type="common">relapsing fever ticks</name>
    <dbReference type="NCBI Taxonomy" id="6937"/>
</organismHost>
<organismHost>
    <name type="scientific">Phacochoerus aethiopicus</name>
    <name type="common">Warthog</name>
    <dbReference type="NCBI Taxonomy" id="85517"/>
</organismHost>
<organismHost>
    <name type="scientific">Phacochoerus africanus</name>
    <name type="common">Warthog</name>
    <dbReference type="NCBI Taxonomy" id="41426"/>
</organismHost>
<organismHost>
    <name type="scientific">Potamochoerus larvatus</name>
    <name type="common">Bushpig</name>
    <dbReference type="NCBI Taxonomy" id="273792"/>
</organismHost>
<organismHost>
    <name type="scientific">Sus scrofa</name>
    <name type="common">Pig</name>
    <dbReference type="NCBI Taxonomy" id="9823"/>
</organismHost>
<evidence type="ECO:0000250" key="1">
    <source>
        <dbReference type="UniProtKB" id="Q65144"/>
    </source>
</evidence>
<evidence type="ECO:0000305" key="2"/>
<proteinExistence type="inferred from homology"/>
<accession>P0CAE0</accession>
<gene>
    <name type="ordered locus">Mal-049</name>
</gene>
<keyword id="KW-0426">Late protein</keyword>
<keyword id="KW-0946">Virion</keyword>